<keyword id="KW-0002">3D-structure</keyword>
<keyword id="KW-0963">Cytoplasm</keyword>
<keyword id="KW-0276">Fatty acid metabolism</keyword>
<keyword id="KW-0443">Lipid metabolism</keyword>
<keyword id="KW-1185">Reference proteome</keyword>
<keyword id="KW-0808">Transferase</keyword>
<sequence length="216" mass="22960">MDAKQRIARRVAQELRDGDIVNLGIGLPTMVANYLPEGIHITLQSENGFLGLGPVTTAHPDLVNAGGQPCGVLPGAAMFDSAMSFALIRGGHIDACVLGGLQVDEEANLANWVVPGKMVPGMGGAMDLVTGSRKVIIAMEHCAKDGSAKILRRCTMPLTAQHAVHMLVTELAVFRFIDGKMWLTEIADGCDLATVRAKTEARFEVAADLNTQRGDL</sequence>
<feature type="chain" id="PRO_0000157915" description="Acetate CoA-transferase subunit beta">
    <location>
        <begin position="1"/>
        <end position="216"/>
    </location>
</feature>
<feature type="active site" evidence="1">
    <location>
        <position position="46"/>
    </location>
</feature>
<feature type="helix" evidence="12">
    <location>
        <begin position="3"/>
        <end position="12"/>
    </location>
</feature>
<feature type="strand" evidence="12">
    <location>
        <begin position="20"/>
        <end position="23"/>
    </location>
</feature>
<feature type="helix" evidence="12">
    <location>
        <begin position="27"/>
        <end position="33"/>
    </location>
</feature>
<feature type="strand" evidence="12">
    <location>
        <begin position="42"/>
        <end position="45"/>
    </location>
</feature>
<feature type="turn" evidence="12">
    <location>
        <begin position="46"/>
        <end position="48"/>
    </location>
</feature>
<feature type="strand" evidence="12">
    <location>
        <begin position="49"/>
        <end position="53"/>
    </location>
</feature>
<feature type="strand" evidence="12">
    <location>
        <begin position="71"/>
        <end position="78"/>
    </location>
</feature>
<feature type="helix" evidence="12">
    <location>
        <begin position="81"/>
        <end position="89"/>
    </location>
</feature>
<feature type="strand" evidence="12">
    <location>
        <begin position="94"/>
        <end position="98"/>
    </location>
</feature>
<feature type="strand" evidence="12">
    <location>
        <begin position="101"/>
        <end position="104"/>
    </location>
</feature>
<feature type="helix" evidence="12">
    <location>
        <begin position="125"/>
        <end position="131"/>
    </location>
</feature>
<feature type="strand" evidence="12">
    <location>
        <begin position="133"/>
        <end position="138"/>
    </location>
</feature>
<feature type="strand" evidence="12">
    <location>
        <begin position="148"/>
        <end position="153"/>
    </location>
</feature>
<feature type="strand" evidence="12">
    <location>
        <begin position="159"/>
        <end position="162"/>
    </location>
</feature>
<feature type="strand" evidence="12">
    <location>
        <begin position="166"/>
        <end position="168"/>
    </location>
</feature>
<feature type="strand" evidence="12">
    <location>
        <begin position="170"/>
        <end position="177"/>
    </location>
</feature>
<feature type="strand" evidence="12">
    <location>
        <begin position="180"/>
        <end position="186"/>
    </location>
</feature>
<feature type="helix" evidence="12">
    <location>
        <begin position="192"/>
        <end position="197"/>
    </location>
</feature>
<feature type="turn" evidence="12">
    <location>
        <begin position="207"/>
        <end position="210"/>
    </location>
</feature>
<evidence type="ECO:0000255" key="1">
    <source>
        <dbReference type="PROSITE-ProRule" id="PRU10034"/>
    </source>
</evidence>
<evidence type="ECO:0000269" key="2">
    <source>
    </source>
</evidence>
<evidence type="ECO:0000269" key="3">
    <source>
    </source>
</evidence>
<evidence type="ECO:0000269" key="4">
    <source>
    </source>
</evidence>
<evidence type="ECO:0000269" key="5">
    <source>
    </source>
</evidence>
<evidence type="ECO:0000269" key="6">
    <source ref="8"/>
</evidence>
<evidence type="ECO:0000303" key="7">
    <source>
    </source>
</evidence>
<evidence type="ECO:0000303" key="8">
    <source>
    </source>
</evidence>
<evidence type="ECO:0000305" key="9"/>
<evidence type="ECO:0000305" key="10">
    <source>
    </source>
</evidence>
<evidence type="ECO:0007744" key="11">
    <source>
        <dbReference type="PDB" id="5DBN"/>
    </source>
</evidence>
<evidence type="ECO:0007829" key="12">
    <source>
        <dbReference type="PDB" id="5DBN"/>
    </source>
</evidence>
<dbReference type="EC" id="2.8.3.8" evidence="2 3 5"/>
<dbReference type="EMBL" id="U00096">
    <property type="protein sequence ID" value="AAC75282.1"/>
    <property type="molecule type" value="Genomic_DNA"/>
</dbReference>
<dbReference type="EMBL" id="AP009048">
    <property type="protein sequence ID" value="BAA16018.1"/>
    <property type="molecule type" value="Genomic_DNA"/>
</dbReference>
<dbReference type="PIR" id="D64992">
    <property type="entry name" value="D64992"/>
</dbReference>
<dbReference type="RefSeq" id="NP_416726.1">
    <property type="nucleotide sequence ID" value="NC_000913.3"/>
</dbReference>
<dbReference type="RefSeq" id="WP_000339065.1">
    <property type="nucleotide sequence ID" value="NZ_SSZK01000030.1"/>
</dbReference>
<dbReference type="PDB" id="5DBN">
    <property type="method" value="X-ray"/>
    <property type="resolution" value="2.55 A"/>
    <property type="chains" value="B/D/F/H=1-216"/>
</dbReference>
<dbReference type="PDBsum" id="5DBN"/>
<dbReference type="SMR" id="P76459"/>
<dbReference type="BioGRID" id="4262987">
    <property type="interactions" value="11"/>
</dbReference>
<dbReference type="BioGRID" id="851060">
    <property type="interactions" value="1"/>
</dbReference>
<dbReference type="FunCoup" id="P76459">
    <property type="interactions" value="410"/>
</dbReference>
<dbReference type="IntAct" id="P76459">
    <property type="interactions" value="4"/>
</dbReference>
<dbReference type="STRING" id="511145.b2222"/>
<dbReference type="PaxDb" id="511145-b2222"/>
<dbReference type="EnsemblBacteria" id="AAC75282">
    <property type="protein sequence ID" value="AAC75282"/>
    <property type="gene ID" value="b2222"/>
</dbReference>
<dbReference type="GeneID" id="946719"/>
<dbReference type="KEGG" id="ecj:JW2216"/>
<dbReference type="KEGG" id="eco:b2222"/>
<dbReference type="KEGG" id="ecoc:C3026_12420"/>
<dbReference type="PATRIC" id="fig|1411691.4.peg.13"/>
<dbReference type="EchoBASE" id="EB1621"/>
<dbReference type="eggNOG" id="COG2057">
    <property type="taxonomic scope" value="Bacteria"/>
</dbReference>
<dbReference type="HOGENOM" id="CLU_019942_4_1_6"/>
<dbReference type="InParanoid" id="P76459"/>
<dbReference type="OMA" id="VAMMHTN"/>
<dbReference type="OrthoDB" id="9778604at2"/>
<dbReference type="PhylomeDB" id="P76459"/>
<dbReference type="BioCyc" id="EcoCyc:ATOA-MONOMER"/>
<dbReference type="BioCyc" id="MetaCyc:ATOA-MONOMER"/>
<dbReference type="UniPathway" id="UPA00656"/>
<dbReference type="PRO" id="PR:P76459"/>
<dbReference type="Proteomes" id="UP000000625">
    <property type="component" value="Chromosome"/>
</dbReference>
<dbReference type="GO" id="GO:0005737">
    <property type="term" value="C:cytoplasm"/>
    <property type="evidence" value="ECO:0007669"/>
    <property type="project" value="UniProtKB-SubCell"/>
</dbReference>
<dbReference type="GO" id="GO:0008775">
    <property type="term" value="F:acetate CoA-transferase activity"/>
    <property type="evidence" value="ECO:0000315"/>
    <property type="project" value="EcoliWiki"/>
</dbReference>
<dbReference type="GO" id="GO:0047371">
    <property type="term" value="F:butyrate-acetoacetate CoA-transferase activity"/>
    <property type="evidence" value="ECO:0007669"/>
    <property type="project" value="RHEA"/>
</dbReference>
<dbReference type="GO" id="GO:0046459">
    <property type="term" value="P:short-chain fatty acid metabolic process"/>
    <property type="evidence" value="ECO:0007669"/>
    <property type="project" value="UniProtKB-UniPathway"/>
</dbReference>
<dbReference type="FunFam" id="3.40.1080.10:FF:000001">
    <property type="entry name" value="Succinyl-coa:3-ketoacid-coenzyme a transferase subunit b"/>
    <property type="match status" value="1"/>
</dbReference>
<dbReference type="Gene3D" id="3.40.1080.10">
    <property type="entry name" value="Glutaconate Coenzyme A-transferase"/>
    <property type="match status" value="1"/>
</dbReference>
<dbReference type="InterPro" id="IPR012791">
    <property type="entry name" value="3-oxoacid_CoA-transf_B"/>
</dbReference>
<dbReference type="InterPro" id="IPR004165">
    <property type="entry name" value="CoA_trans_fam_I"/>
</dbReference>
<dbReference type="InterPro" id="IPR004164">
    <property type="entry name" value="CoA_transf_AS"/>
</dbReference>
<dbReference type="InterPro" id="IPR037171">
    <property type="entry name" value="NagB/RpiA_transferase-like"/>
</dbReference>
<dbReference type="NCBIfam" id="TIGR02428">
    <property type="entry name" value="pcaJ_scoB_fam"/>
    <property type="match status" value="1"/>
</dbReference>
<dbReference type="PANTHER" id="PTHR13707">
    <property type="entry name" value="KETOACID-COENZYME A TRANSFERASE"/>
    <property type="match status" value="1"/>
</dbReference>
<dbReference type="PANTHER" id="PTHR13707:SF57">
    <property type="entry name" value="SUCCINYL-COA:3-KETOACID COENZYME A TRANSFERASE SUBUNIT B-RELATED"/>
    <property type="match status" value="1"/>
</dbReference>
<dbReference type="Pfam" id="PF01144">
    <property type="entry name" value="CoA_trans"/>
    <property type="match status" value="1"/>
</dbReference>
<dbReference type="SMART" id="SM00882">
    <property type="entry name" value="CoA_trans"/>
    <property type="match status" value="1"/>
</dbReference>
<dbReference type="SUPFAM" id="SSF100950">
    <property type="entry name" value="NagB/RpiA/CoA transferase-like"/>
    <property type="match status" value="1"/>
</dbReference>
<dbReference type="PROSITE" id="PS01274">
    <property type="entry name" value="COA_TRANSF_2"/>
    <property type="match status" value="1"/>
</dbReference>
<proteinExistence type="evidence at protein level"/>
<organism>
    <name type="scientific">Escherichia coli (strain K12)</name>
    <dbReference type="NCBI Taxonomy" id="83333"/>
    <lineage>
        <taxon>Bacteria</taxon>
        <taxon>Pseudomonadati</taxon>
        <taxon>Pseudomonadota</taxon>
        <taxon>Gammaproteobacteria</taxon>
        <taxon>Enterobacterales</taxon>
        <taxon>Enterobacteriaceae</taxon>
        <taxon>Escherichia</taxon>
    </lineage>
</organism>
<gene>
    <name evidence="8" type="primary">atoA</name>
    <name type="ordered locus">b2222</name>
    <name type="ordered locus">JW2216</name>
</gene>
<reference key="1">
    <citation type="journal article" date="1996" name="DNA Res.">
        <title>A 460-kb DNA sequence of the Escherichia coli K-12 genome corresponding to the 40.1-50.0 min region on the linkage map.</title>
        <authorList>
            <person name="Itoh T."/>
            <person name="Aiba H."/>
            <person name="Baba T."/>
            <person name="Fujita K."/>
            <person name="Hayashi K."/>
            <person name="Inada T."/>
            <person name="Isono K."/>
            <person name="Kasai H."/>
            <person name="Kimura S."/>
            <person name="Kitakawa M."/>
            <person name="Kitagawa M."/>
            <person name="Makino K."/>
            <person name="Miki T."/>
            <person name="Mizobuchi K."/>
            <person name="Mori H."/>
            <person name="Mori T."/>
            <person name="Motomura K."/>
            <person name="Nakade S."/>
            <person name="Nakamura Y."/>
            <person name="Nashimoto H."/>
            <person name="Nishio Y."/>
            <person name="Oshima T."/>
            <person name="Saito N."/>
            <person name="Sampei G."/>
            <person name="Seki Y."/>
            <person name="Sivasundaram S."/>
            <person name="Tagami H."/>
            <person name="Takeda J."/>
            <person name="Takemoto K."/>
            <person name="Wada C."/>
            <person name="Yamamoto Y."/>
            <person name="Horiuchi T."/>
        </authorList>
    </citation>
    <scope>NUCLEOTIDE SEQUENCE [LARGE SCALE GENOMIC DNA]</scope>
    <source>
        <strain>K12 / W3110 / ATCC 27325 / DSM 5911</strain>
    </source>
</reference>
<reference key="2">
    <citation type="journal article" date="1997" name="Science">
        <title>The complete genome sequence of Escherichia coli K-12.</title>
        <authorList>
            <person name="Blattner F.R."/>
            <person name="Plunkett G. III"/>
            <person name="Bloch C.A."/>
            <person name="Perna N.T."/>
            <person name="Burland V."/>
            <person name="Riley M."/>
            <person name="Collado-Vides J."/>
            <person name="Glasner J.D."/>
            <person name="Rode C.K."/>
            <person name="Mayhew G.F."/>
            <person name="Gregor J."/>
            <person name="Davis N.W."/>
            <person name="Kirkpatrick H.A."/>
            <person name="Goeden M.A."/>
            <person name="Rose D.J."/>
            <person name="Mau B."/>
            <person name="Shao Y."/>
        </authorList>
    </citation>
    <scope>NUCLEOTIDE SEQUENCE [LARGE SCALE GENOMIC DNA]</scope>
    <source>
        <strain>K12 / MG1655 / ATCC 47076</strain>
    </source>
</reference>
<reference key="3">
    <citation type="journal article" date="2006" name="Mol. Syst. Biol.">
        <title>Highly accurate genome sequences of Escherichia coli K-12 strains MG1655 and W3110.</title>
        <authorList>
            <person name="Hayashi K."/>
            <person name="Morooka N."/>
            <person name="Yamamoto Y."/>
            <person name="Fujita K."/>
            <person name="Isono K."/>
            <person name="Choi S."/>
            <person name="Ohtsubo E."/>
            <person name="Baba T."/>
            <person name="Wanner B.L."/>
            <person name="Mori H."/>
            <person name="Horiuchi T."/>
        </authorList>
    </citation>
    <scope>NUCLEOTIDE SEQUENCE [LARGE SCALE GENOMIC DNA]</scope>
    <source>
        <strain>K12 / W3110 / ATCC 27325 / DSM 5911</strain>
    </source>
</reference>
<reference key="4">
    <citation type="journal article" date="1975" name="Arch. Biochem. Biophys.">
        <title>Purification and properties of Escherichia coli coenzyme A-transferase.</title>
        <authorList>
            <person name="Sramek S.J."/>
            <person name="Frerman F.E."/>
        </authorList>
    </citation>
    <scope>FUNCTION</scope>
    <scope>CATALYTIC ACTIVITY</scope>
    <scope>ACTIVITY REGULATION</scope>
    <scope>SUBUNIT</scope>
    <scope>SUBCELLULAR LOCATION</scope>
</reference>
<reference key="5">
    <citation type="journal article" date="1975" name="Arch. Biochem. Biophys.">
        <title>Escherichia coli coenzyme A-transferase: kinetics, catalytic pathway and structure.</title>
        <authorList>
            <person name="Sramek S.J."/>
            <person name="Frerman F.E."/>
        </authorList>
    </citation>
    <scope>FUNCTION</scope>
    <scope>CATALYTIC ACTIVITY</scope>
    <scope>REACTION MECHANISM</scope>
    <scope>BIOPHYSICOCHEMICAL PROPERTIES</scope>
</reference>
<reference key="6">
    <citation type="journal article" date="1987" name="J. Bacteriol.">
        <title>Genetic and molecular characterization of the genes involved in short-chain fatty acid degradation in Escherichia coli: the ato system.</title>
        <authorList>
            <person name="Jenkins L.S."/>
            <person name="Nunn W.D."/>
        </authorList>
    </citation>
    <scope>FUNCTION</scope>
    <scope>CATALYTIC ACTIVITY</scope>
    <scope>SUBUNIT</scope>
    <scope>DISRUPTION PHENOTYPE</scope>
    <source>
        <strain>K12</strain>
    </source>
</reference>
<reference key="7">
    <citation type="journal article" date="1987" name="J. Bacteriol.">
        <title>Regulation of the ato operon by the atoC gene in Escherichia coli.</title>
        <authorList>
            <person name="Jenkins L.S."/>
            <person name="Nunn W.D."/>
        </authorList>
    </citation>
    <scope>INDUCTION</scope>
    <source>
        <strain>K12</strain>
    </source>
</reference>
<reference evidence="11" key="8">
    <citation type="submission" date="2015-08" db="PDB data bank">
        <title>Crystal structure of AtoDA complex.</title>
        <authorList>
            <person name="Arbing M.A."/>
            <person name="Koo C.W."/>
            <person name="Shin A."/>
            <person name="Medrano-Soto A."/>
            <person name="Eisenberg D."/>
        </authorList>
    </citation>
    <scope>X-RAY CRYSTALLOGRAPHY (2.55 ANGSTROMS)</scope>
    <scope>SUBUNIT</scope>
</reference>
<comment type="function">
    <text evidence="2 3 5">Coenzyme A transferase which is involved in short-chain fatty acid degradation and catalyzes the activation of short-chain fatty acids to their respective CoA thiolesters (PubMed:1103739, PubMed:3025185). During acetoacetate degradation, catalyzes the transfer of CoA from acetyl-CoA to acetoacetate by a mechanism involving a covalent enzyme-CoA compound as a reaction intermediate (PubMed:1103741). Utilizes a variety of short chain acyl-CoA and carboxylic acid substrates but exhibits maximal activity with normal and 3-keto substrates (PubMed:1103739).</text>
</comment>
<comment type="catalytic activity">
    <reaction evidence="2 3 5">
        <text>an acyl-CoA + acetate = a carboxylate + acetyl-CoA</text>
        <dbReference type="Rhea" id="RHEA:13381"/>
        <dbReference type="ChEBI" id="CHEBI:29067"/>
        <dbReference type="ChEBI" id="CHEBI:30089"/>
        <dbReference type="ChEBI" id="CHEBI:57288"/>
        <dbReference type="ChEBI" id="CHEBI:58342"/>
        <dbReference type="EC" id="2.8.3.8"/>
    </reaction>
</comment>
<comment type="catalytic activity">
    <reaction evidence="2 3 5">
        <text>acetoacetate + acetyl-CoA = acetoacetyl-CoA + acetate</text>
        <dbReference type="Rhea" id="RHEA:27806"/>
        <dbReference type="ChEBI" id="CHEBI:13705"/>
        <dbReference type="ChEBI" id="CHEBI:30089"/>
        <dbReference type="ChEBI" id="CHEBI:57286"/>
        <dbReference type="ChEBI" id="CHEBI:57288"/>
    </reaction>
</comment>
<comment type="catalytic activity">
    <reaction evidence="2">
        <text>butanoate + acetyl-CoA = butanoyl-CoA + acetate</text>
        <dbReference type="Rhea" id="RHEA:30071"/>
        <dbReference type="ChEBI" id="CHEBI:17968"/>
        <dbReference type="ChEBI" id="CHEBI:30089"/>
        <dbReference type="ChEBI" id="CHEBI:57288"/>
        <dbReference type="ChEBI" id="CHEBI:57371"/>
    </reaction>
</comment>
<comment type="catalytic activity">
    <reaction evidence="2">
        <text>acetoacetate + butanoyl-CoA = acetoacetyl-CoA + butanoate</text>
        <dbReference type="Rhea" id="RHEA:12961"/>
        <dbReference type="ChEBI" id="CHEBI:13705"/>
        <dbReference type="ChEBI" id="CHEBI:17968"/>
        <dbReference type="ChEBI" id="CHEBI:57286"/>
        <dbReference type="ChEBI" id="CHEBI:57371"/>
    </reaction>
</comment>
<comment type="activity regulation">
    <text evidence="2">Inhibited by p-chloromercuribenzoate.</text>
</comment>
<comment type="biophysicochemical properties">
    <kinetics>
        <KM evidence="3">0.26 mM for acetyl-CoA (for acetoacetyl-CoA formation)</KM>
        <KM evidence="3">0.035 mM for acetoacetyl-CoA (for acetyl-CoA formation)</KM>
    </kinetics>
</comment>
<comment type="pathway">
    <text evidence="10">Lipid metabolism; short-chain fatty acid metabolism.</text>
</comment>
<comment type="subunit">
    <text evidence="2 6 10">Heterotetramer composed of two alpha subunits (AtoD) and two beta subunits (AtoA).</text>
</comment>
<comment type="interaction">
    <interactant intactId="EBI-1128061">
        <id>P76459</id>
    </interactant>
    <interactant intactId="EBI-1128087">
        <id>P0AC02</id>
        <label>bamD</label>
    </interactant>
    <organismsDiffer>false</organismsDiffer>
    <experiments>2</experiments>
</comment>
<comment type="subcellular location">
    <subcellularLocation>
        <location evidence="2">Cytoplasm</location>
    </subcellularLocation>
    <text evidence="2">Membrane associated.</text>
</comment>
<comment type="induction">
    <text evidence="4">Transcriptionally regulated by the regulatory protein AtoC.</text>
</comment>
<comment type="disruption phenotype">
    <text evidence="5">Mutant lacks acetoacetyl-CoA transferase activity.</text>
</comment>
<comment type="similarity">
    <text evidence="9">Belongs to the 3-oxoacid CoA-transferase subunit B family.</text>
</comment>
<accession>P76459</accession>
<accession>P94762</accession>
<protein>
    <recommendedName>
        <fullName evidence="9">Acetate CoA-transferase subunit beta</fullName>
        <ecNumber evidence="2 3 5">2.8.3.8</ecNumber>
    </recommendedName>
    <alternativeName>
        <fullName evidence="8">Acetoacetyl-CoA transferase subunit beta</fullName>
        <shortName evidence="8">AA-CoA transferase subunit beta</shortName>
    </alternativeName>
    <alternativeName>
        <fullName evidence="7">Acetyl-CoA:acetoacetate CoA-transferase subunit beta</fullName>
    </alternativeName>
</protein>
<name>ATOA_ECOLI</name>